<organism>
    <name type="scientific">Salmonella agona (strain SL483)</name>
    <dbReference type="NCBI Taxonomy" id="454166"/>
    <lineage>
        <taxon>Bacteria</taxon>
        <taxon>Pseudomonadati</taxon>
        <taxon>Pseudomonadota</taxon>
        <taxon>Gammaproteobacteria</taxon>
        <taxon>Enterobacterales</taxon>
        <taxon>Enterobacteriaceae</taxon>
        <taxon>Salmonella</taxon>
    </lineage>
</organism>
<evidence type="ECO:0000255" key="1">
    <source>
        <dbReference type="HAMAP-Rule" id="MF_01276"/>
    </source>
</evidence>
<gene>
    <name evidence="1" type="primary">patA</name>
    <name type="ordered locus">SeAg_B3405</name>
</gene>
<dbReference type="EC" id="2.6.1.82" evidence="1"/>
<dbReference type="EC" id="2.6.1.29" evidence="1"/>
<dbReference type="EMBL" id="CP001138">
    <property type="protein sequence ID" value="ACH48710.1"/>
    <property type="molecule type" value="Genomic_DNA"/>
</dbReference>
<dbReference type="SMR" id="B5F6B4"/>
<dbReference type="KEGG" id="sea:SeAg_B3405"/>
<dbReference type="HOGENOM" id="CLU_016922_10_0_6"/>
<dbReference type="UniPathway" id="UPA00188">
    <property type="reaction ID" value="UER00290"/>
</dbReference>
<dbReference type="Proteomes" id="UP000008819">
    <property type="component" value="Chromosome"/>
</dbReference>
<dbReference type="GO" id="GO:0019161">
    <property type="term" value="F:diamine transaminase activity"/>
    <property type="evidence" value="ECO:0007669"/>
    <property type="project" value="UniProtKB-EC"/>
</dbReference>
<dbReference type="GO" id="GO:0042802">
    <property type="term" value="F:identical protein binding"/>
    <property type="evidence" value="ECO:0007669"/>
    <property type="project" value="TreeGrafter"/>
</dbReference>
<dbReference type="GO" id="GO:0033094">
    <property type="term" value="F:putrescine--2-oxoglutarate transaminase activity"/>
    <property type="evidence" value="ECO:0007669"/>
    <property type="project" value="UniProtKB-UniRule"/>
</dbReference>
<dbReference type="GO" id="GO:0030170">
    <property type="term" value="F:pyridoxal phosphate binding"/>
    <property type="evidence" value="ECO:0007669"/>
    <property type="project" value="UniProtKB-UniRule"/>
</dbReference>
<dbReference type="GO" id="GO:0019477">
    <property type="term" value="P:L-lysine catabolic process"/>
    <property type="evidence" value="ECO:0007669"/>
    <property type="project" value="UniProtKB-UniRule"/>
</dbReference>
<dbReference type="GO" id="GO:0009447">
    <property type="term" value="P:putrescine catabolic process"/>
    <property type="evidence" value="ECO:0007669"/>
    <property type="project" value="UniProtKB-UniRule"/>
</dbReference>
<dbReference type="CDD" id="cd00610">
    <property type="entry name" value="OAT_like"/>
    <property type="match status" value="1"/>
</dbReference>
<dbReference type="FunFam" id="3.40.640.10:FF:000004">
    <property type="entry name" value="Acetylornithine aminotransferase"/>
    <property type="match status" value="1"/>
</dbReference>
<dbReference type="Gene3D" id="3.90.1150.10">
    <property type="entry name" value="Aspartate Aminotransferase, domain 1"/>
    <property type="match status" value="1"/>
</dbReference>
<dbReference type="Gene3D" id="3.40.640.10">
    <property type="entry name" value="Type I PLP-dependent aspartate aminotransferase-like (Major domain)"/>
    <property type="match status" value="1"/>
</dbReference>
<dbReference type="HAMAP" id="MF_01276">
    <property type="entry name" value="Putres_aminotrans_3"/>
    <property type="match status" value="1"/>
</dbReference>
<dbReference type="InterPro" id="IPR005814">
    <property type="entry name" value="Aminotrans_3"/>
</dbReference>
<dbReference type="InterPro" id="IPR049704">
    <property type="entry name" value="Aminotrans_3_PPA_site"/>
</dbReference>
<dbReference type="InterPro" id="IPR050103">
    <property type="entry name" value="Class-III_PLP-dep_AT"/>
</dbReference>
<dbReference type="InterPro" id="IPR017747">
    <property type="entry name" value="Putrescine_aminotransferase"/>
</dbReference>
<dbReference type="InterPro" id="IPR015424">
    <property type="entry name" value="PyrdxlP-dep_Trfase"/>
</dbReference>
<dbReference type="InterPro" id="IPR015421">
    <property type="entry name" value="PyrdxlP-dep_Trfase_major"/>
</dbReference>
<dbReference type="InterPro" id="IPR015422">
    <property type="entry name" value="PyrdxlP-dep_Trfase_small"/>
</dbReference>
<dbReference type="NCBIfam" id="NF008570">
    <property type="entry name" value="PRK11522.1"/>
    <property type="match status" value="1"/>
</dbReference>
<dbReference type="NCBIfam" id="TIGR03372">
    <property type="entry name" value="putres_am_tran"/>
    <property type="match status" value="1"/>
</dbReference>
<dbReference type="PANTHER" id="PTHR11986">
    <property type="entry name" value="AMINOTRANSFERASE CLASS III"/>
    <property type="match status" value="1"/>
</dbReference>
<dbReference type="PANTHER" id="PTHR11986:SF112">
    <property type="entry name" value="PUTRESCINE AMINOTRANSFERASE"/>
    <property type="match status" value="1"/>
</dbReference>
<dbReference type="Pfam" id="PF00202">
    <property type="entry name" value="Aminotran_3"/>
    <property type="match status" value="1"/>
</dbReference>
<dbReference type="PIRSF" id="PIRSF000521">
    <property type="entry name" value="Transaminase_4ab_Lys_Orn"/>
    <property type="match status" value="1"/>
</dbReference>
<dbReference type="SUPFAM" id="SSF53383">
    <property type="entry name" value="PLP-dependent transferases"/>
    <property type="match status" value="1"/>
</dbReference>
<dbReference type="PROSITE" id="PS00600">
    <property type="entry name" value="AA_TRANSFER_CLASS_3"/>
    <property type="match status" value="1"/>
</dbReference>
<protein>
    <recommendedName>
        <fullName evidence="1">Putrescine aminotransferase</fullName>
        <shortName evidence="1">PAT</shortName>
        <shortName evidence="1">PATase</shortName>
        <ecNumber evidence="1">2.6.1.82</ecNumber>
    </recommendedName>
    <alternativeName>
        <fullName evidence="1">Cadaverine transaminase</fullName>
    </alternativeName>
    <alternativeName>
        <fullName evidence="1">Diamine transaminase</fullName>
        <ecNumber evidence="1">2.6.1.29</ecNumber>
    </alternativeName>
    <alternativeName>
        <fullName evidence="1">Putrescine transaminase</fullName>
    </alternativeName>
    <alternativeName>
        <fullName evidence="1">Putrescine--2-oxoglutaric acid transaminase</fullName>
    </alternativeName>
</protein>
<accession>B5F6B4</accession>
<sequence length="459" mass="49695">MNRLPSSASALACSAHALNLIEKRTLNHEEMKALNREVIDYFKEHVNPGFLEYRKSVTAGGDYGAVEWQAGSLNTLVDTQGQEFIDCLGGFGIFNVGHRNPVVVSAVQNQLAKQPLHSQELLDPLRAMLAKTLAALTPGKLKYSFFCNSGTESVEAALKLAKAYQSPRGKFTFIATSGAFHGKSLGALSATAKSTFRRPFMPLLPGFRHVPFGNIDAMSMAFSEGKKTGDEIAAVILEPIQGEGGVILPPQGYLTEVRKLCDEFGALMILDEVQTGMGRTGKMFACEHENVQPDILCLAKALGGGVMPIGATIATEEVFSVLFDNPFLHTTTFGGNPLACAAALATINVLLEQNLPAQAEQKGDTLLDGFRQLAREYPNLVHDARGKGMLMAIEFVDNETGYRFASEMFRQRVLVAGTLNNAKTIRIEPPLTLTIELCEQVLKSARNALAAMQVSVEEV</sequence>
<keyword id="KW-0032">Aminotransferase</keyword>
<keyword id="KW-0663">Pyridoxal phosphate</keyword>
<keyword id="KW-0808">Transferase</keyword>
<reference key="1">
    <citation type="journal article" date="2011" name="J. Bacteriol.">
        <title>Comparative genomics of 28 Salmonella enterica isolates: evidence for CRISPR-mediated adaptive sublineage evolution.</title>
        <authorList>
            <person name="Fricke W.F."/>
            <person name="Mammel M.K."/>
            <person name="McDermott P.F."/>
            <person name="Tartera C."/>
            <person name="White D.G."/>
            <person name="Leclerc J.E."/>
            <person name="Ravel J."/>
            <person name="Cebula T.A."/>
        </authorList>
    </citation>
    <scope>NUCLEOTIDE SEQUENCE [LARGE SCALE GENOMIC DNA]</scope>
    <source>
        <strain>SL483</strain>
    </source>
</reference>
<comment type="function">
    <text evidence="1">Catalyzes the aminotransferase reaction from putrescine to 2-oxoglutarate, leading to glutamate and 4-aminobutanal, which spontaneously cyclizes to form 1-pyrroline. This is the first step in one of two pathways for putrescine degradation, where putrescine is converted into 4-aminobutanoate (gamma-aminobutyrate or GABA) via 4-aminobutanal. Also functions as a cadaverine transaminase in a a L-lysine degradation pathway to succinate that proceeds via cadaverine, glutarate and L-2-hydroxyglutarate.</text>
</comment>
<comment type="catalytic activity">
    <reaction evidence="1">
        <text>an alkane-alpha,omega-diamine + 2-oxoglutarate = an omega-aminoaldehyde + L-glutamate</text>
        <dbReference type="Rhea" id="RHEA:18217"/>
        <dbReference type="Rhea" id="RHEA-COMP:9766"/>
        <dbReference type="Rhea" id="RHEA-COMP:12750"/>
        <dbReference type="ChEBI" id="CHEBI:16810"/>
        <dbReference type="ChEBI" id="CHEBI:29985"/>
        <dbReference type="ChEBI" id="CHEBI:70977"/>
        <dbReference type="ChEBI" id="CHEBI:133427"/>
        <dbReference type="EC" id="2.6.1.29"/>
    </reaction>
    <physiologicalReaction direction="left-to-right" evidence="1">
        <dbReference type="Rhea" id="RHEA:18218"/>
    </physiologicalReaction>
</comment>
<comment type="catalytic activity">
    <reaction evidence="1">
        <text>putrescine + 2-oxoglutarate = 1-pyrroline + L-glutamate + H2O</text>
        <dbReference type="Rhea" id="RHEA:12268"/>
        <dbReference type="ChEBI" id="CHEBI:15377"/>
        <dbReference type="ChEBI" id="CHEBI:16810"/>
        <dbReference type="ChEBI" id="CHEBI:29985"/>
        <dbReference type="ChEBI" id="CHEBI:36781"/>
        <dbReference type="ChEBI" id="CHEBI:326268"/>
        <dbReference type="EC" id="2.6.1.82"/>
    </reaction>
    <physiologicalReaction direction="left-to-right" evidence="1">
        <dbReference type="Rhea" id="RHEA:12269"/>
    </physiologicalReaction>
</comment>
<comment type="catalytic activity">
    <reaction evidence="1">
        <text>cadaverine + 2-oxoglutarate = 5-aminopentanal + L-glutamate</text>
        <dbReference type="Rhea" id="RHEA:61624"/>
        <dbReference type="ChEBI" id="CHEBI:16810"/>
        <dbReference type="ChEBI" id="CHEBI:29985"/>
        <dbReference type="ChEBI" id="CHEBI:58384"/>
        <dbReference type="ChEBI" id="CHEBI:144896"/>
    </reaction>
    <physiologicalReaction direction="left-to-right" evidence="1">
        <dbReference type="Rhea" id="RHEA:61625"/>
    </physiologicalReaction>
</comment>
<comment type="cofactor">
    <cofactor evidence="1">
        <name>pyridoxal 5'-phosphate</name>
        <dbReference type="ChEBI" id="CHEBI:597326"/>
    </cofactor>
</comment>
<comment type="pathway">
    <text evidence="1">Amine and polyamine degradation; putrescine degradation; 4-aminobutanal from putrescine (transaminase route): step 1/1.</text>
</comment>
<comment type="similarity">
    <text evidence="1">Belongs to the class-III pyridoxal-phosphate-dependent aminotransferase family. Putrescine aminotransferase subfamily.</text>
</comment>
<name>PAT_SALA4</name>
<proteinExistence type="inferred from homology"/>
<feature type="chain" id="PRO_1000140278" description="Putrescine aminotransferase">
    <location>
        <begin position="1"/>
        <end position="459"/>
    </location>
</feature>
<feature type="binding site" description="in other chain" evidence="1">
    <location>
        <begin position="150"/>
        <end position="151"/>
    </location>
    <ligand>
        <name>pyridoxal 5'-phosphate</name>
        <dbReference type="ChEBI" id="CHEBI:597326"/>
        <note>ligand shared between dimeric partners</note>
    </ligand>
</feature>
<feature type="binding site" description="in other chain" evidence="1">
    <location>
        <position position="274"/>
    </location>
    <ligand>
        <name>pyridoxal 5'-phosphate</name>
        <dbReference type="ChEBI" id="CHEBI:597326"/>
        <note>ligand shared between dimeric partners</note>
    </ligand>
</feature>
<feature type="binding site" evidence="1">
    <location>
        <position position="332"/>
    </location>
    <ligand>
        <name>pyridoxal 5'-phosphate</name>
        <dbReference type="ChEBI" id="CHEBI:597326"/>
        <note>ligand shared between dimeric partners</note>
    </ligand>
</feature>
<feature type="modified residue" description="N6-(pyridoxal phosphate)lysine" evidence="1">
    <location>
        <position position="300"/>
    </location>
</feature>